<dbReference type="EMBL" id="CR860347">
    <property type="protein sequence ID" value="CAH92481.1"/>
    <property type="molecule type" value="mRNA"/>
</dbReference>
<dbReference type="RefSeq" id="NP_001126463.1">
    <property type="nucleotide sequence ID" value="NM_001132991.3"/>
</dbReference>
<dbReference type="RefSeq" id="XP_009237508.1">
    <property type="nucleotide sequence ID" value="XM_009239233.3"/>
</dbReference>
<dbReference type="RefSeq" id="XP_009237509.1">
    <property type="nucleotide sequence ID" value="XM_009239234.1"/>
</dbReference>
<dbReference type="RefSeq" id="XP_009237510.1">
    <property type="nucleotide sequence ID" value="XM_009239235.1"/>
</dbReference>
<dbReference type="STRING" id="9601.ENSPPYP00000015689"/>
<dbReference type="Ensembl" id="ENSPPYT00000040679.1">
    <property type="protein sequence ID" value="ENSPPYP00000035104.1"/>
    <property type="gene ID" value="ENSPPYG00000014027.3"/>
</dbReference>
<dbReference type="GeneID" id="100173450"/>
<dbReference type="KEGG" id="pon:100173450"/>
<dbReference type="CTD" id="10777"/>
<dbReference type="eggNOG" id="KOG2953">
    <property type="taxonomic scope" value="Eukaryota"/>
</dbReference>
<dbReference type="GeneTree" id="ENSGT00940000160796"/>
<dbReference type="InParanoid" id="Q5R6X9"/>
<dbReference type="OrthoDB" id="278430at2759"/>
<dbReference type="Proteomes" id="UP000001595">
    <property type="component" value="Chromosome 3"/>
</dbReference>
<dbReference type="GO" id="GO:0005737">
    <property type="term" value="C:cytoplasm"/>
    <property type="evidence" value="ECO:0007669"/>
    <property type="project" value="UniProtKB-SubCell"/>
</dbReference>
<dbReference type="GO" id="GO:0005516">
    <property type="term" value="F:calmodulin binding"/>
    <property type="evidence" value="ECO:0007669"/>
    <property type="project" value="UniProtKB-KW"/>
</dbReference>
<proteinExistence type="inferred from homology"/>
<evidence type="ECO:0000250" key="1"/>
<evidence type="ECO:0000250" key="2">
    <source>
        <dbReference type="UniProtKB" id="Q7M2N1"/>
    </source>
</evidence>
<evidence type="ECO:0000250" key="3">
    <source>
        <dbReference type="UniProtKB" id="Q9DCB4"/>
    </source>
</evidence>
<evidence type="ECO:0000250" key="4">
    <source>
        <dbReference type="UniProtKB" id="Q9UBL0"/>
    </source>
</evidence>
<evidence type="ECO:0000256" key="5">
    <source>
        <dbReference type="SAM" id="MobiDB-lite"/>
    </source>
</evidence>
<organism>
    <name type="scientific">Pongo abelii</name>
    <name type="common">Sumatran orangutan</name>
    <name type="synonym">Pongo pygmaeus abelii</name>
    <dbReference type="NCBI Taxonomy" id="9601"/>
    <lineage>
        <taxon>Eukaryota</taxon>
        <taxon>Metazoa</taxon>
        <taxon>Chordata</taxon>
        <taxon>Craniata</taxon>
        <taxon>Vertebrata</taxon>
        <taxon>Euteleostomi</taxon>
        <taxon>Mammalia</taxon>
        <taxon>Eutheria</taxon>
        <taxon>Euarchontoglires</taxon>
        <taxon>Primates</taxon>
        <taxon>Haplorrhini</taxon>
        <taxon>Catarrhini</taxon>
        <taxon>Hominidae</taxon>
        <taxon>Pongo</taxon>
    </lineage>
</organism>
<comment type="function">
    <text evidence="1">May act as a competitive inhibitor of calmodulin-dependent enzymes such as calcineurin in neurons.</text>
</comment>
<comment type="subunit">
    <text evidence="1">Interacts with CALM1.</text>
</comment>
<comment type="subcellular location">
    <subcellularLocation>
        <location evidence="1">Cytoplasm</location>
    </subcellularLocation>
</comment>
<comment type="PTM">
    <text evidence="1">Phosphorylation at Ser-56 favors interaction with CALM1.</text>
</comment>
<name>ARP21_PONAB</name>
<sequence length="89" mass="9674">MSEQGDLNQAIAEEGGTEQETATPENGIVKSESLDEEEKLELQRRLEAQNQERRKSKSGAGKGKLTRSLAVCEESSARPGGESLQDQTL</sequence>
<keyword id="KW-0007">Acetylation</keyword>
<keyword id="KW-0112">Calmodulin-binding</keyword>
<keyword id="KW-0963">Cytoplasm</keyword>
<keyword id="KW-0597">Phosphoprotein</keyword>
<keyword id="KW-1185">Reference proteome</keyword>
<gene>
    <name type="primary">ARPP21</name>
</gene>
<protein>
    <recommendedName>
        <fullName>cAMP-regulated phosphoprotein 21</fullName>
        <shortName>ARPP-21</shortName>
    </recommendedName>
</protein>
<accession>Q5R6X9</accession>
<feature type="initiator methionine" description="Removed" evidence="2">
    <location>
        <position position="1"/>
    </location>
</feature>
<feature type="chain" id="PRO_0000064684" description="cAMP-regulated phosphoprotein 21">
    <location>
        <begin position="2"/>
        <end position="89"/>
    </location>
</feature>
<feature type="region of interest" description="Disordered" evidence="5">
    <location>
        <begin position="1"/>
        <end position="89"/>
    </location>
</feature>
<feature type="compositionally biased region" description="Low complexity" evidence="5">
    <location>
        <begin position="9"/>
        <end position="25"/>
    </location>
</feature>
<feature type="compositionally biased region" description="Basic and acidic residues" evidence="5">
    <location>
        <begin position="40"/>
        <end position="53"/>
    </location>
</feature>
<feature type="modified residue" description="N-acetylserine" evidence="2">
    <location>
        <position position="2"/>
    </location>
</feature>
<feature type="modified residue" description="Phosphoserine" evidence="4">
    <location>
        <position position="33"/>
    </location>
</feature>
<feature type="modified residue" description="Phosphoserine" evidence="3">
    <location>
        <position position="56"/>
    </location>
</feature>
<reference key="1">
    <citation type="submission" date="2004-11" db="EMBL/GenBank/DDBJ databases">
        <authorList>
            <consortium name="The German cDNA consortium"/>
        </authorList>
    </citation>
    <scope>NUCLEOTIDE SEQUENCE [LARGE SCALE MRNA]</scope>
    <source>
        <tissue>Brain cortex</tissue>
    </source>
</reference>